<name>WDR75_MOUSE</name>
<comment type="function">
    <text evidence="1">Ribosome biogenesis factor. Part of the small subunit (SSU) processome, first precursor of the small eukaryotic ribosomal subunit. During the assembly of the SSU processome in the nucleolus, many ribosome biogenesis factors, an RNA chaperone and ribosomal proteins associate with the nascent pre-rRNA and work in concert to generate RNA folding, modifications, rearrangements and cleavage as well as targeted degradation of pre-ribosomal RNA by the RNA exosome. Involved in nucleolar processing of pre-18S ribosomal RNA. Required for optimal pre-ribosomal RNA transcription by RNA polymerase I.</text>
</comment>
<comment type="subunit">
    <text evidence="1">Component of the proposed t-UTP subcomplex of the ribosomal small subunit (SSU) processome. SSU processome is composed of more than 70 proteins and the RNA chaperone small nucleolar RNA (snoRNA) U3.</text>
</comment>
<comment type="subcellular location">
    <subcellularLocation>
        <location evidence="1">Nucleus</location>
        <location evidence="1">Nucleolus</location>
    </subcellularLocation>
</comment>
<feature type="chain" id="PRO_0000435727" description="WD repeat-containing protein 75">
    <location>
        <begin position="1"/>
        <end position="830"/>
    </location>
</feature>
<feature type="repeat" description="WD 1" evidence="2">
    <location>
        <begin position="4"/>
        <end position="42"/>
    </location>
</feature>
<feature type="repeat" description="WD 2" evidence="2">
    <location>
        <begin position="46"/>
        <end position="85"/>
    </location>
</feature>
<feature type="repeat" description="WD 3" evidence="2">
    <location>
        <begin position="89"/>
        <end position="130"/>
    </location>
</feature>
<feature type="repeat" description="WD 4" evidence="2">
    <location>
        <begin position="144"/>
        <end position="183"/>
    </location>
</feature>
<feature type="repeat" description="WD 5" evidence="2">
    <location>
        <begin position="192"/>
        <end position="230"/>
    </location>
</feature>
<feature type="repeat" description="WD 6" evidence="2">
    <location>
        <begin position="236"/>
        <end position="275"/>
    </location>
</feature>
<feature type="repeat" description="WD 7" evidence="2">
    <location>
        <begin position="278"/>
        <end position="317"/>
    </location>
</feature>
<feature type="repeat" description="WD 8" evidence="2">
    <location>
        <begin position="323"/>
        <end position="361"/>
    </location>
</feature>
<feature type="repeat" description="WD 9" evidence="2">
    <location>
        <begin position="375"/>
        <end position="422"/>
    </location>
</feature>
<feature type="repeat" description="WD 10" evidence="2">
    <location>
        <begin position="429"/>
        <end position="473"/>
    </location>
</feature>
<feature type="repeat" description="WD 11" evidence="2">
    <location>
        <begin position="486"/>
        <end position="524"/>
    </location>
</feature>
<feature type="repeat" description="WD 12" evidence="2">
    <location>
        <begin position="528"/>
        <end position="568"/>
    </location>
</feature>
<feature type="repeat" description="WD 13" evidence="2">
    <location>
        <begin position="573"/>
        <end position="610"/>
    </location>
</feature>
<feature type="region of interest" description="Disordered" evidence="3">
    <location>
        <begin position="761"/>
        <end position="807"/>
    </location>
</feature>
<feature type="modified residue" description="Phosphoserine" evidence="1">
    <location>
        <position position="663"/>
    </location>
</feature>
<feature type="modified residue" description="Phosphoserine" evidence="1">
    <location>
        <position position="671"/>
    </location>
</feature>
<feature type="modified residue" description="Phosphoserine" evidence="5 6">
    <location>
        <position position="778"/>
    </location>
</feature>
<feature type="modified residue" description="Phosphoserine" evidence="6">
    <location>
        <position position="781"/>
    </location>
</feature>
<feature type="modified residue" description="Phosphotyrosine" evidence="6">
    <location>
        <position position="785"/>
    </location>
</feature>
<feature type="modified residue" description="Phosphoserine" evidence="1">
    <location>
        <position position="811"/>
    </location>
</feature>
<feature type="cross-link" description="Glycyl lysine isopeptide (Lys-Gly) (interchain with G-Cter in SUMO2)" evidence="1">
    <location>
        <position position="426"/>
    </location>
</feature>
<feature type="cross-link" description="Glycyl lysine isopeptide (Lys-Gly) (interchain with G-Cter in SUMO2)" evidence="1">
    <location>
        <position position="675"/>
    </location>
</feature>
<feature type="sequence conflict" description="In Ref. 4; AAI17882 and 3; EDK96877." evidence="4" ref="4 3">
    <location>
        <position position="795"/>
    </location>
</feature>
<accession>Q3U821</accession>
<accession>Q08EC1</accession>
<organism>
    <name type="scientific">Mus musculus</name>
    <name type="common">Mouse</name>
    <dbReference type="NCBI Taxonomy" id="10090"/>
    <lineage>
        <taxon>Eukaryota</taxon>
        <taxon>Metazoa</taxon>
        <taxon>Chordata</taxon>
        <taxon>Craniata</taxon>
        <taxon>Vertebrata</taxon>
        <taxon>Euteleostomi</taxon>
        <taxon>Mammalia</taxon>
        <taxon>Eutheria</taxon>
        <taxon>Euarchontoglires</taxon>
        <taxon>Glires</taxon>
        <taxon>Rodentia</taxon>
        <taxon>Myomorpha</taxon>
        <taxon>Muroidea</taxon>
        <taxon>Muridae</taxon>
        <taxon>Murinae</taxon>
        <taxon>Mus</taxon>
        <taxon>Mus</taxon>
    </lineage>
</organism>
<reference key="1">
    <citation type="journal article" date="2005" name="Science">
        <title>The transcriptional landscape of the mammalian genome.</title>
        <authorList>
            <person name="Carninci P."/>
            <person name="Kasukawa T."/>
            <person name="Katayama S."/>
            <person name="Gough J."/>
            <person name="Frith M.C."/>
            <person name="Maeda N."/>
            <person name="Oyama R."/>
            <person name="Ravasi T."/>
            <person name="Lenhard B."/>
            <person name="Wells C."/>
            <person name="Kodzius R."/>
            <person name="Shimokawa K."/>
            <person name="Bajic V.B."/>
            <person name="Brenner S.E."/>
            <person name="Batalov S."/>
            <person name="Forrest A.R."/>
            <person name="Zavolan M."/>
            <person name="Davis M.J."/>
            <person name="Wilming L.G."/>
            <person name="Aidinis V."/>
            <person name="Allen J.E."/>
            <person name="Ambesi-Impiombato A."/>
            <person name="Apweiler R."/>
            <person name="Aturaliya R.N."/>
            <person name="Bailey T.L."/>
            <person name="Bansal M."/>
            <person name="Baxter L."/>
            <person name="Beisel K.W."/>
            <person name="Bersano T."/>
            <person name="Bono H."/>
            <person name="Chalk A.M."/>
            <person name="Chiu K.P."/>
            <person name="Choudhary V."/>
            <person name="Christoffels A."/>
            <person name="Clutterbuck D.R."/>
            <person name="Crowe M.L."/>
            <person name="Dalla E."/>
            <person name="Dalrymple B.P."/>
            <person name="de Bono B."/>
            <person name="Della Gatta G."/>
            <person name="di Bernardo D."/>
            <person name="Down T."/>
            <person name="Engstrom P."/>
            <person name="Fagiolini M."/>
            <person name="Faulkner G."/>
            <person name="Fletcher C.F."/>
            <person name="Fukushima T."/>
            <person name="Furuno M."/>
            <person name="Futaki S."/>
            <person name="Gariboldi M."/>
            <person name="Georgii-Hemming P."/>
            <person name="Gingeras T.R."/>
            <person name="Gojobori T."/>
            <person name="Green R.E."/>
            <person name="Gustincich S."/>
            <person name="Harbers M."/>
            <person name="Hayashi Y."/>
            <person name="Hensch T.K."/>
            <person name="Hirokawa N."/>
            <person name="Hill D."/>
            <person name="Huminiecki L."/>
            <person name="Iacono M."/>
            <person name="Ikeo K."/>
            <person name="Iwama A."/>
            <person name="Ishikawa T."/>
            <person name="Jakt M."/>
            <person name="Kanapin A."/>
            <person name="Katoh M."/>
            <person name="Kawasawa Y."/>
            <person name="Kelso J."/>
            <person name="Kitamura H."/>
            <person name="Kitano H."/>
            <person name="Kollias G."/>
            <person name="Krishnan S.P."/>
            <person name="Kruger A."/>
            <person name="Kummerfeld S.K."/>
            <person name="Kurochkin I.V."/>
            <person name="Lareau L.F."/>
            <person name="Lazarevic D."/>
            <person name="Lipovich L."/>
            <person name="Liu J."/>
            <person name="Liuni S."/>
            <person name="McWilliam S."/>
            <person name="Madan Babu M."/>
            <person name="Madera M."/>
            <person name="Marchionni L."/>
            <person name="Matsuda H."/>
            <person name="Matsuzawa S."/>
            <person name="Miki H."/>
            <person name="Mignone F."/>
            <person name="Miyake S."/>
            <person name="Morris K."/>
            <person name="Mottagui-Tabar S."/>
            <person name="Mulder N."/>
            <person name="Nakano N."/>
            <person name="Nakauchi H."/>
            <person name="Ng P."/>
            <person name="Nilsson R."/>
            <person name="Nishiguchi S."/>
            <person name="Nishikawa S."/>
            <person name="Nori F."/>
            <person name="Ohara O."/>
            <person name="Okazaki Y."/>
            <person name="Orlando V."/>
            <person name="Pang K.C."/>
            <person name="Pavan W.J."/>
            <person name="Pavesi G."/>
            <person name="Pesole G."/>
            <person name="Petrovsky N."/>
            <person name="Piazza S."/>
            <person name="Reed J."/>
            <person name="Reid J.F."/>
            <person name="Ring B.Z."/>
            <person name="Ringwald M."/>
            <person name="Rost B."/>
            <person name="Ruan Y."/>
            <person name="Salzberg S.L."/>
            <person name="Sandelin A."/>
            <person name="Schneider C."/>
            <person name="Schoenbach C."/>
            <person name="Sekiguchi K."/>
            <person name="Semple C.A."/>
            <person name="Seno S."/>
            <person name="Sessa L."/>
            <person name="Sheng Y."/>
            <person name="Shibata Y."/>
            <person name="Shimada H."/>
            <person name="Shimada K."/>
            <person name="Silva D."/>
            <person name="Sinclair B."/>
            <person name="Sperling S."/>
            <person name="Stupka E."/>
            <person name="Sugiura K."/>
            <person name="Sultana R."/>
            <person name="Takenaka Y."/>
            <person name="Taki K."/>
            <person name="Tammoja K."/>
            <person name="Tan S.L."/>
            <person name="Tang S."/>
            <person name="Taylor M.S."/>
            <person name="Tegner J."/>
            <person name="Teichmann S.A."/>
            <person name="Ueda H.R."/>
            <person name="van Nimwegen E."/>
            <person name="Verardo R."/>
            <person name="Wei C.L."/>
            <person name="Yagi K."/>
            <person name="Yamanishi H."/>
            <person name="Zabarovsky E."/>
            <person name="Zhu S."/>
            <person name="Zimmer A."/>
            <person name="Hide W."/>
            <person name="Bult C."/>
            <person name="Grimmond S.M."/>
            <person name="Teasdale R.D."/>
            <person name="Liu E.T."/>
            <person name="Brusic V."/>
            <person name="Quackenbush J."/>
            <person name="Wahlestedt C."/>
            <person name="Mattick J.S."/>
            <person name="Hume D.A."/>
            <person name="Kai C."/>
            <person name="Sasaki D."/>
            <person name="Tomaru Y."/>
            <person name="Fukuda S."/>
            <person name="Kanamori-Katayama M."/>
            <person name="Suzuki M."/>
            <person name="Aoki J."/>
            <person name="Arakawa T."/>
            <person name="Iida J."/>
            <person name="Imamura K."/>
            <person name="Itoh M."/>
            <person name="Kato T."/>
            <person name="Kawaji H."/>
            <person name="Kawagashira N."/>
            <person name="Kawashima T."/>
            <person name="Kojima M."/>
            <person name="Kondo S."/>
            <person name="Konno H."/>
            <person name="Nakano K."/>
            <person name="Ninomiya N."/>
            <person name="Nishio T."/>
            <person name="Okada M."/>
            <person name="Plessy C."/>
            <person name="Shibata K."/>
            <person name="Shiraki T."/>
            <person name="Suzuki S."/>
            <person name="Tagami M."/>
            <person name="Waki K."/>
            <person name="Watahiki A."/>
            <person name="Okamura-Oho Y."/>
            <person name="Suzuki H."/>
            <person name="Kawai J."/>
            <person name="Hayashizaki Y."/>
        </authorList>
    </citation>
    <scope>NUCLEOTIDE SEQUENCE [LARGE SCALE MRNA]</scope>
    <source>
        <strain>C57BL/6J</strain>
        <tissue>Bone marrow</tissue>
    </source>
</reference>
<reference key="2">
    <citation type="journal article" date="2009" name="PLoS Biol.">
        <title>Lineage-specific biology revealed by a finished genome assembly of the mouse.</title>
        <authorList>
            <person name="Church D.M."/>
            <person name="Goodstadt L."/>
            <person name="Hillier L.W."/>
            <person name="Zody M.C."/>
            <person name="Goldstein S."/>
            <person name="She X."/>
            <person name="Bult C.J."/>
            <person name="Agarwala R."/>
            <person name="Cherry J.L."/>
            <person name="DiCuccio M."/>
            <person name="Hlavina W."/>
            <person name="Kapustin Y."/>
            <person name="Meric P."/>
            <person name="Maglott D."/>
            <person name="Birtle Z."/>
            <person name="Marques A.C."/>
            <person name="Graves T."/>
            <person name="Zhou S."/>
            <person name="Teague B."/>
            <person name="Potamousis K."/>
            <person name="Churas C."/>
            <person name="Place M."/>
            <person name="Herschleb J."/>
            <person name="Runnheim R."/>
            <person name="Forrest D."/>
            <person name="Amos-Landgraf J."/>
            <person name="Schwartz D.C."/>
            <person name="Cheng Z."/>
            <person name="Lindblad-Toh K."/>
            <person name="Eichler E.E."/>
            <person name="Ponting C.P."/>
        </authorList>
    </citation>
    <scope>NUCLEOTIDE SEQUENCE [LARGE SCALE GENOMIC DNA]</scope>
    <source>
        <strain>C57BL/6J</strain>
    </source>
</reference>
<reference key="3">
    <citation type="submission" date="2005-09" db="EMBL/GenBank/DDBJ databases">
        <authorList>
            <person name="Mural R.J."/>
            <person name="Adams M.D."/>
            <person name="Myers E.W."/>
            <person name="Smith H.O."/>
            <person name="Venter J.C."/>
        </authorList>
    </citation>
    <scope>NUCLEOTIDE SEQUENCE [LARGE SCALE GENOMIC DNA]</scope>
</reference>
<reference key="4">
    <citation type="journal article" date="2004" name="Genome Res.">
        <title>The status, quality, and expansion of the NIH full-length cDNA project: the Mammalian Gene Collection (MGC).</title>
        <authorList>
            <consortium name="The MGC Project Team"/>
        </authorList>
    </citation>
    <scope>NUCLEOTIDE SEQUENCE [LARGE SCALE MRNA]</scope>
</reference>
<reference key="5">
    <citation type="journal article" date="2007" name="Proc. Natl. Acad. Sci. U.S.A.">
        <title>Large-scale phosphorylation analysis of mouse liver.</title>
        <authorList>
            <person name="Villen J."/>
            <person name="Beausoleil S.A."/>
            <person name="Gerber S.A."/>
            <person name="Gygi S.P."/>
        </authorList>
    </citation>
    <scope>PHOSPHORYLATION [LARGE SCALE ANALYSIS] AT SER-778</scope>
    <scope>IDENTIFICATION BY MASS SPECTROMETRY [LARGE SCALE ANALYSIS]</scope>
    <source>
        <tissue>Liver</tissue>
    </source>
</reference>
<reference key="6">
    <citation type="journal article" date="2010" name="Cell">
        <title>A tissue-specific atlas of mouse protein phosphorylation and expression.</title>
        <authorList>
            <person name="Huttlin E.L."/>
            <person name="Jedrychowski M.P."/>
            <person name="Elias J.E."/>
            <person name="Goswami T."/>
            <person name="Rad R."/>
            <person name="Beausoleil S.A."/>
            <person name="Villen J."/>
            <person name="Haas W."/>
            <person name="Sowa M.E."/>
            <person name="Gygi S.P."/>
        </authorList>
    </citation>
    <scope>PHOSPHORYLATION [LARGE SCALE ANALYSIS] AT SER-778; SER-781 AND TYR-785</scope>
    <scope>IDENTIFICATION BY MASS SPECTROMETRY [LARGE SCALE ANALYSIS]</scope>
    <source>
        <tissue>Lung</tissue>
        <tissue>Spleen</tissue>
        <tissue>Testis</tissue>
    </source>
</reference>
<protein>
    <recommendedName>
        <fullName>WD repeat-containing protein 75</fullName>
    </recommendedName>
    <alternativeName>
        <fullName>U3 small nucleolar RNA-associated protein 17 homolog</fullName>
    </alternativeName>
</protein>
<proteinExistence type="evidence at protein level"/>
<gene>
    <name type="primary">Wdr75</name>
    <name type="synonym">Utp17</name>
</gene>
<keyword id="KW-1017">Isopeptide bond</keyword>
<keyword id="KW-0539">Nucleus</keyword>
<keyword id="KW-0597">Phosphoprotein</keyword>
<keyword id="KW-1185">Reference proteome</keyword>
<keyword id="KW-0677">Repeat</keyword>
<keyword id="KW-0690">Ribosome biogenesis</keyword>
<keyword id="KW-0698">rRNA processing</keyword>
<keyword id="KW-0804">Transcription</keyword>
<keyword id="KW-0805">Transcription regulation</keyword>
<keyword id="KW-0832">Ubl conjugation</keyword>
<keyword id="KW-0853">WD repeat</keyword>
<sequence length="830" mass="94037">MVEEGVRVVRCGGSRLNFRRAVFSVDSKYIFCVSGDFVKVYSTTTEECVHILHGHTDLVSGILVNPSNHLQLYSCSFDGTIKLWDYVDGILIKTFTIGPKLHAFFIPLHAEDSVFLTISKEEPDIFQLVSVKLPKSTSQDVEARQLTFVLDYINRSPKCIAFGNEGEYVAAVRDFYLSVYFFKKKKTCNFTLPSTKNKKNAKNKFTCVACHPKEDCIASGHMDGKIRLWRNFHSDQKYTYTCLHWHHDMVMDLAFTVTGTSLLSGGRECVLVEWRDGSEKNKEFLPRLGSSIEHISVSPAGDLFCTSHSDNKITVIHRNLDASAVIQGLVKDRSISTGLMVDPRTKALVLNGKPGHLQFYSLQGDKQLYNLDIIQQEYINDEGLTQTELTKAAFGCSGTWLATVEQRQENENELELQMKLWNYSKKTQGFVLNTKIAMPHDDHITALCFNNAESYEKPILVTASRDGHFKVWILTDDSDIYKKAIAWTCDFVGSYHKYQATNCCFSEDGSLLAVSFEEIVTIWDSQTWELKCTFCQRAGKIRHLCFGRLTCSKYLLGTTDNGILCCWNLLSCSIQWSAKLNVRVMEPDPYSDHVAAVAQSSAGSDLFVFKPSEPRPLYIQKNVSREEVQWGVFVPRDVPESFTSETHQWLNRSQFYFLTKSQSLLTFSTKSPEEKLTPTSKQLLAEESLPTTPFSFILGKHRQQQGAKLTETSENELVQLPLTENIPAITELLHTPAHVLPSASFLCSLFVNSLLLSKETKSAEEVPDDVDMEGNKESDDSDEEYDLTEKDKETNNNTDLGEDAIHQLSKSEEKELRKFRKVDYSWLTAL</sequence>
<dbReference type="EMBL" id="AK152412">
    <property type="protein sequence ID" value="BAE31198.1"/>
    <property type="molecule type" value="mRNA"/>
</dbReference>
<dbReference type="EMBL" id="AC109305">
    <property type="status" value="NOT_ANNOTATED_CDS"/>
    <property type="molecule type" value="Genomic_DNA"/>
</dbReference>
<dbReference type="EMBL" id="CH466589">
    <property type="protein sequence ID" value="EDK96877.1"/>
    <property type="molecule type" value="Genomic_DNA"/>
</dbReference>
<dbReference type="EMBL" id="BC117880">
    <property type="protein sequence ID" value="AAI17881.1"/>
    <property type="molecule type" value="mRNA"/>
</dbReference>
<dbReference type="EMBL" id="BC117881">
    <property type="protein sequence ID" value="AAI17882.1"/>
    <property type="molecule type" value="mRNA"/>
</dbReference>
<dbReference type="CCDS" id="CCDS14932.1"/>
<dbReference type="RefSeq" id="NP_082875.1">
    <property type="nucleotide sequence ID" value="NM_028599.3"/>
</dbReference>
<dbReference type="SMR" id="Q3U821"/>
<dbReference type="FunCoup" id="Q3U821">
    <property type="interactions" value="3090"/>
</dbReference>
<dbReference type="STRING" id="10090.ENSMUSP00000027139"/>
<dbReference type="iPTMnet" id="Q3U821"/>
<dbReference type="PhosphoSitePlus" id="Q3U821"/>
<dbReference type="SwissPalm" id="Q3U821"/>
<dbReference type="jPOST" id="Q3U821"/>
<dbReference type="PaxDb" id="10090-ENSMUSP00000027139"/>
<dbReference type="ProteomicsDB" id="297551"/>
<dbReference type="Pumba" id="Q3U821"/>
<dbReference type="Antibodypedia" id="52112">
    <property type="antibodies" value="23 antibodies from 11 providers"/>
</dbReference>
<dbReference type="Ensembl" id="ENSMUST00000027139.15">
    <property type="protein sequence ID" value="ENSMUSP00000027139.9"/>
    <property type="gene ID" value="ENSMUSG00000025995.17"/>
</dbReference>
<dbReference type="GeneID" id="73674"/>
<dbReference type="KEGG" id="mmu:73674"/>
<dbReference type="UCSC" id="uc007awt.1">
    <property type="organism name" value="mouse"/>
</dbReference>
<dbReference type="AGR" id="MGI:1920924"/>
<dbReference type="CTD" id="84128"/>
<dbReference type="MGI" id="MGI:1920924">
    <property type="gene designation" value="Wdr75"/>
</dbReference>
<dbReference type="VEuPathDB" id="HostDB:ENSMUSG00000025995"/>
<dbReference type="eggNOG" id="KOG1963">
    <property type="taxonomic scope" value="Eukaryota"/>
</dbReference>
<dbReference type="GeneTree" id="ENSGT00390000006303"/>
<dbReference type="HOGENOM" id="CLU_005417_2_0_1"/>
<dbReference type="InParanoid" id="Q3U821"/>
<dbReference type="OMA" id="WILNTRI"/>
<dbReference type="OrthoDB" id="4096at2759"/>
<dbReference type="PhylomeDB" id="Q3U821"/>
<dbReference type="TreeFam" id="TF323469"/>
<dbReference type="Reactome" id="R-MMU-6791226">
    <property type="pathway name" value="Major pathway of rRNA processing in the nucleolus and cytosol"/>
</dbReference>
<dbReference type="BioGRID-ORCS" id="73674">
    <property type="hits" value="31 hits in 80 CRISPR screens"/>
</dbReference>
<dbReference type="ChiTaRS" id="Wdr75">
    <property type="organism name" value="mouse"/>
</dbReference>
<dbReference type="PRO" id="PR:Q3U821"/>
<dbReference type="Proteomes" id="UP000000589">
    <property type="component" value="Chromosome 1"/>
</dbReference>
<dbReference type="RNAct" id="Q3U821">
    <property type="molecule type" value="protein"/>
</dbReference>
<dbReference type="Bgee" id="ENSMUSG00000025995">
    <property type="expression patterns" value="Expressed in otic placode and 263 other cell types or tissues"/>
</dbReference>
<dbReference type="ExpressionAtlas" id="Q3U821">
    <property type="expression patterns" value="baseline and differential"/>
</dbReference>
<dbReference type="GO" id="GO:0005730">
    <property type="term" value="C:nucleolus"/>
    <property type="evidence" value="ECO:0007669"/>
    <property type="project" value="UniProtKB-SubCell"/>
</dbReference>
<dbReference type="GO" id="GO:0032040">
    <property type="term" value="C:small-subunit processome"/>
    <property type="evidence" value="ECO:0000250"/>
    <property type="project" value="UniProtKB"/>
</dbReference>
<dbReference type="GO" id="GO:0003723">
    <property type="term" value="F:RNA binding"/>
    <property type="evidence" value="ECO:0007669"/>
    <property type="project" value="InterPro"/>
</dbReference>
<dbReference type="GO" id="GO:2000234">
    <property type="term" value="P:positive regulation of rRNA processing"/>
    <property type="evidence" value="ECO:0007669"/>
    <property type="project" value="Ensembl"/>
</dbReference>
<dbReference type="GO" id="GO:0045943">
    <property type="term" value="P:positive regulation of transcription by RNA polymerase I"/>
    <property type="evidence" value="ECO:0007669"/>
    <property type="project" value="Ensembl"/>
</dbReference>
<dbReference type="GO" id="GO:0042274">
    <property type="term" value="P:ribosomal small subunit biogenesis"/>
    <property type="evidence" value="ECO:0000250"/>
    <property type="project" value="UniProtKB"/>
</dbReference>
<dbReference type="GO" id="GO:0006364">
    <property type="term" value="P:rRNA processing"/>
    <property type="evidence" value="ECO:0007669"/>
    <property type="project" value="UniProtKB-KW"/>
</dbReference>
<dbReference type="FunFam" id="2.130.10.10:FF:000687">
    <property type="entry name" value="WD repeat domain 75"/>
    <property type="match status" value="1"/>
</dbReference>
<dbReference type="FunFam" id="2.130.10.10:FF:000618">
    <property type="entry name" value="WD repeat-containing protein 75"/>
    <property type="match status" value="1"/>
</dbReference>
<dbReference type="Gene3D" id="2.130.10.10">
    <property type="entry name" value="YVTN repeat-like/Quinoprotein amine dehydrogenase"/>
    <property type="match status" value="3"/>
</dbReference>
<dbReference type="InterPro" id="IPR011047">
    <property type="entry name" value="Quinoprotein_ADH-like_sf"/>
</dbReference>
<dbReference type="InterPro" id="IPR015943">
    <property type="entry name" value="WD40/YVTN_repeat-like_dom_sf"/>
</dbReference>
<dbReference type="InterPro" id="IPR036322">
    <property type="entry name" value="WD40_repeat_dom_sf"/>
</dbReference>
<dbReference type="InterPro" id="IPR001680">
    <property type="entry name" value="WD40_rpt"/>
</dbReference>
<dbReference type="InterPro" id="IPR053826">
    <property type="entry name" value="WDR75"/>
</dbReference>
<dbReference type="PANTHER" id="PTHR44215">
    <property type="entry name" value="WD REPEAT-CONTAINING PROTEIN 75"/>
    <property type="match status" value="1"/>
</dbReference>
<dbReference type="PANTHER" id="PTHR44215:SF1">
    <property type="entry name" value="WD REPEAT-CONTAINING PROTEIN 75"/>
    <property type="match status" value="1"/>
</dbReference>
<dbReference type="Pfam" id="PF23869">
    <property type="entry name" value="Beta-prop_WDR75_1st"/>
    <property type="match status" value="1"/>
</dbReference>
<dbReference type="Pfam" id="PF23769">
    <property type="entry name" value="Beta-prop_WDR75_2nd"/>
    <property type="match status" value="1"/>
</dbReference>
<dbReference type="SMART" id="SM00320">
    <property type="entry name" value="WD40"/>
    <property type="match status" value="8"/>
</dbReference>
<dbReference type="SUPFAM" id="SSF50998">
    <property type="entry name" value="Quinoprotein alcohol dehydrogenase-like"/>
    <property type="match status" value="1"/>
</dbReference>
<dbReference type="SUPFAM" id="SSF50978">
    <property type="entry name" value="WD40 repeat-like"/>
    <property type="match status" value="1"/>
</dbReference>
<dbReference type="PROSITE" id="PS50082">
    <property type="entry name" value="WD_REPEATS_2"/>
    <property type="match status" value="1"/>
</dbReference>
<dbReference type="PROSITE" id="PS50294">
    <property type="entry name" value="WD_REPEATS_REGION"/>
    <property type="match status" value="2"/>
</dbReference>
<evidence type="ECO:0000250" key="1">
    <source>
        <dbReference type="UniProtKB" id="Q8IWA0"/>
    </source>
</evidence>
<evidence type="ECO:0000255" key="2"/>
<evidence type="ECO:0000256" key="3">
    <source>
        <dbReference type="SAM" id="MobiDB-lite"/>
    </source>
</evidence>
<evidence type="ECO:0000305" key="4"/>
<evidence type="ECO:0007744" key="5">
    <source>
    </source>
</evidence>
<evidence type="ECO:0007744" key="6">
    <source>
    </source>
</evidence>